<sequence length="193" mass="21792">MHKLVIATWNKEKRDELSRYFQQMDVSIQSLRGDIPDVKETGATFIENARLKAEAVRQYEPTAIIVAEDSGLCVDALDGFPNVRTARFMEGTDDERAAKVLQRLGDRPMSERTAVFQSAVVILFPDGLMRTAVGKIEGWITYGPVKDGQGYGGIFILCDEQLLAENIQMARCNHRSQAIRQAVYYMEEWLVTV</sequence>
<gene>
    <name type="ordered locus">BH1160</name>
</gene>
<feature type="chain" id="PRO_0000178124" description="Non-canonical purine NTP pyrophosphatase homolog">
    <location>
        <begin position="1"/>
        <end position="193"/>
    </location>
</feature>
<protein>
    <recommendedName>
        <fullName>Non-canonical purine NTP pyrophosphatase homolog</fullName>
        <ecNumber>3.6.1.-</ecNumber>
    </recommendedName>
</protein>
<name>NTPAH_HALH5</name>
<keyword id="KW-0378">Hydrolase</keyword>
<keyword id="KW-1185">Reference proteome</keyword>
<reference key="1">
    <citation type="journal article" date="2000" name="Nucleic Acids Res.">
        <title>Complete genome sequence of the alkaliphilic bacterium Bacillus halodurans and genomic sequence comparison with Bacillus subtilis.</title>
        <authorList>
            <person name="Takami H."/>
            <person name="Nakasone K."/>
            <person name="Takaki Y."/>
            <person name="Maeno G."/>
            <person name="Sasaki R."/>
            <person name="Masui N."/>
            <person name="Fuji F."/>
            <person name="Hirama C."/>
            <person name="Nakamura Y."/>
            <person name="Ogasawara N."/>
            <person name="Kuhara S."/>
            <person name="Horikoshi K."/>
        </authorList>
    </citation>
    <scope>NUCLEOTIDE SEQUENCE [LARGE SCALE GENOMIC DNA]</scope>
    <source>
        <strain>ATCC BAA-125 / DSM 18197 / FERM 7344 / JCM 9153 / C-125</strain>
    </source>
</reference>
<organism>
    <name type="scientific">Halalkalibacterium halodurans (strain ATCC BAA-125 / DSM 18197 / FERM 7344 / JCM 9153 / C-125)</name>
    <name type="common">Bacillus halodurans</name>
    <dbReference type="NCBI Taxonomy" id="272558"/>
    <lineage>
        <taxon>Bacteria</taxon>
        <taxon>Bacillati</taxon>
        <taxon>Bacillota</taxon>
        <taxon>Bacilli</taxon>
        <taxon>Bacillales</taxon>
        <taxon>Bacillaceae</taxon>
        <taxon>Halalkalibacterium (ex Joshi et al. 2022)</taxon>
    </lineage>
</organism>
<proteinExistence type="inferred from homology"/>
<dbReference type="EC" id="3.6.1.-"/>
<dbReference type="EMBL" id="BA000004">
    <property type="protein sequence ID" value="BAB04879.1"/>
    <property type="molecule type" value="Genomic_DNA"/>
</dbReference>
<dbReference type="PIR" id="H83794">
    <property type="entry name" value="H83794"/>
</dbReference>
<dbReference type="RefSeq" id="WP_010897330.1">
    <property type="nucleotide sequence ID" value="NC_002570.2"/>
</dbReference>
<dbReference type="SMR" id="Q9KDQ1"/>
<dbReference type="STRING" id="272558.gene:10727054"/>
<dbReference type="KEGG" id="bha:BH1160"/>
<dbReference type="eggNOG" id="COG0127">
    <property type="taxonomic scope" value="Bacteria"/>
</dbReference>
<dbReference type="HOGENOM" id="CLU_082080_0_2_9"/>
<dbReference type="OrthoDB" id="2848448at2"/>
<dbReference type="Proteomes" id="UP000001258">
    <property type="component" value="Chromosome"/>
</dbReference>
<dbReference type="GO" id="GO:0005829">
    <property type="term" value="C:cytosol"/>
    <property type="evidence" value="ECO:0007669"/>
    <property type="project" value="TreeGrafter"/>
</dbReference>
<dbReference type="GO" id="GO:0047429">
    <property type="term" value="F:nucleoside triphosphate diphosphatase activity"/>
    <property type="evidence" value="ECO:0007669"/>
    <property type="project" value="InterPro"/>
</dbReference>
<dbReference type="GO" id="GO:0009143">
    <property type="term" value="P:nucleoside triphosphate catabolic process"/>
    <property type="evidence" value="ECO:0007669"/>
    <property type="project" value="InterPro"/>
</dbReference>
<dbReference type="CDD" id="cd00515">
    <property type="entry name" value="HAM1"/>
    <property type="match status" value="1"/>
</dbReference>
<dbReference type="Gene3D" id="3.90.950.10">
    <property type="match status" value="1"/>
</dbReference>
<dbReference type="InterPro" id="IPR029001">
    <property type="entry name" value="ITPase-like_fam"/>
</dbReference>
<dbReference type="InterPro" id="IPR002637">
    <property type="entry name" value="RdgB/HAM1"/>
</dbReference>
<dbReference type="PANTHER" id="PTHR11067:SF9">
    <property type="entry name" value="INOSINE TRIPHOSPHATE PYROPHOSPHATASE"/>
    <property type="match status" value="1"/>
</dbReference>
<dbReference type="PANTHER" id="PTHR11067">
    <property type="entry name" value="INOSINE TRIPHOSPHATE PYROPHOSPHATASE/HAM1 PROTEIN"/>
    <property type="match status" value="1"/>
</dbReference>
<dbReference type="Pfam" id="PF01725">
    <property type="entry name" value="Ham1p_like"/>
    <property type="match status" value="1"/>
</dbReference>
<dbReference type="SUPFAM" id="SSF52972">
    <property type="entry name" value="ITPase-like"/>
    <property type="match status" value="1"/>
</dbReference>
<accession>Q9KDQ1</accession>
<evidence type="ECO:0000305" key="1"/>
<comment type="similarity">
    <text evidence="1">Belongs to the HAM1 NTPase family.</text>
</comment>